<name>HPRK_BACSU</name>
<comment type="function">
    <text evidence="7">Catalyzes the ATP- as well as the pyrophosphate-dependent phosphorylation of 'Ser-45' in HPr, a phosphocarrier protein of the phosphoenolpyruvate-dependent sugar phosphotransferase system (PTS). HprK/P also catalyzes the pyrophosphate-producing, inorganic phosphate-dependent dephosphorylation (phosphorolysis) of seryl-phosphorylated HPr (P-Ser-HPr). The two antagonistic activities of HprK/P are regulated by several intracellular metabolites, which change their concentration in response to the absence or presence of rapidly metabolisable carbon sources (glucose, fructose, etc.) in the growth medium. Also phosphorylates/dephosphorylates the HPr-like catabolite repression protein crh on 'Ser-46'. Therefore, by controlling the phosphorylation state of HPr and crh, HPrK/P is a sensor enzyme that plays a major role in the regulation of carbon metabolism and sugar transport: it mediates carbon catabolite repression (CCR), and regulates PTS-catalyzed carbohydrate uptake and inducer exclusion.</text>
</comment>
<comment type="catalytic activity">
    <reaction>
        <text>[HPr protein]-L-serine + ATP = [HPr protein]-O-phospho-L-serine + ADP + H(+)</text>
        <dbReference type="Rhea" id="RHEA:46600"/>
        <dbReference type="Rhea" id="RHEA-COMP:11602"/>
        <dbReference type="Rhea" id="RHEA-COMP:11603"/>
        <dbReference type="ChEBI" id="CHEBI:15378"/>
        <dbReference type="ChEBI" id="CHEBI:29999"/>
        <dbReference type="ChEBI" id="CHEBI:30616"/>
        <dbReference type="ChEBI" id="CHEBI:83421"/>
        <dbReference type="ChEBI" id="CHEBI:456216"/>
    </reaction>
</comment>
<comment type="catalytic activity">
    <reaction>
        <text>[HPr protein]-O-phospho-L-serine + phosphate + H(+) = [HPr protein]-L-serine + diphosphate</text>
        <dbReference type="Rhea" id="RHEA:46604"/>
        <dbReference type="Rhea" id="RHEA-COMP:11602"/>
        <dbReference type="Rhea" id="RHEA-COMP:11603"/>
        <dbReference type="ChEBI" id="CHEBI:15378"/>
        <dbReference type="ChEBI" id="CHEBI:29999"/>
        <dbReference type="ChEBI" id="CHEBI:33019"/>
        <dbReference type="ChEBI" id="CHEBI:43474"/>
        <dbReference type="ChEBI" id="CHEBI:83421"/>
    </reaction>
</comment>
<comment type="cofactor">
    <cofactor evidence="3">
        <name>Mg(2+)</name>
        <dbReference type="ChEBI" id="CHEBI:18420"/>
    </cofactor>
    <cofactor evidence="3">
        <name>Ca(2+)</name>
        <dbReference type="ChEBI" id="CHEBI:29108"/>
    </cofactor>
    <text evidence="3">The enzyme may harbor two different cation-binding sites, one that interacts specifically with the nucleotide, and the other that is involved in the binding of the protein substrate.</text>
</comment>
<comment type="activity regulation">
    <text>Is active as a kinase only at high ATP concentrations or at low ATP concentrations in the presence of the allosteric activator fructose 1,6-bisphosphate (FBP). The pyrophosphate-dependent HPr phosphorylation is not stimulated by FBP. Kinase activity is inhibited by inorganic phosphate (Pi). Dephosphorylation of HPr(Ser-P) by B.subtilis HPrK/P becomes prevalent when the concentration of Pi increases. Thus, the kinase activity may prevail under conditions of good nutrient supply, whereas the phosphorylase activity is dominant if carbon and energy sources become limiting.</text>
</comment>
<comment type="biophysicochemical properties">
    <kinetics>
        <KM>78 uM for HPr</KM>
        <KM>85 uM for P-Ser-HPr</KM>
        <KM>265 uM for phosphate</KM>
        <KM>785 uM for pyrophosphate</KM>
    </kinetics>
</comment>
<comment type="subunit">
    <text>Homohexamer.</text>
</comment>
<comment type="interaction">
    <interactant intactId="EBI-5242785">
        <id>O34483</id>
    </interactant>
    <interactant intactId="EBI-2121844">
        <id>P11065</id>
        <label>hpr</label>
    </interactant>
    <organismsDiffer>false</organismsDiffer>
    <experiments>3</experiments>
</comment>
<comment type="interaction">
    <interactant intactId="EBI-5242785">
        <id>O34483</id>
    </interactant>
    <interactant intactId="EBI-5255200">
        <id>O31435</id>
        <label>ybdM</label>
    </interactant>
    <organismsDiffer>false</organismsDiffer>
    <experiments>5</experiments>
</comment>
<comment type="interaction">
    <interactant intactId="EBI-5242785">
        <id>O34483</id>
    </interactant>
    <interactant intactId="EBI-9302929">
        <id>P96716</id>
        <label>ywqD</label>
    </interactant>
    <organismsDiffer>false</organismsDiffer>
    <experiments>2</experiments>
</comment>
<comment type="induction">
    <text evidence="4">Constitutively expressed, with or without glucose in the growth medium.</text>
</comment>
<comment type="domain">
    <text>The Walker A ATP-binding motif also binds Pi and PPi.</text>
</comment>
<comment type="mass spectrometry"/>
<comment type="miscellaneous">
    <text>Both phosphorylation and phosphorolysis are carried out by the same active site and suggest a common mechanism for both reactions.</text>
</comment>
<comment type="miscellaneous">
    <text>According to PubMed:12779331, the mutation G152A reduces the kinase activity about twofold and has little effect on phosphorylase activity, whereas according to PubMed:12055300, it completely prevents both functions. This conflicting result may be explained by limiting amounts substrates conditions used in PubMed:12779331 assays.</text>
</comment>
<comment type="similarity">
    <text evidence="8">Belongs to the HPrK/P family.</text>
</comment>
<comment type="caution">
    <text evidence="9">Was originally called HPr kinase/phosphatase, but P-Ser-HPr dephosphorylation was found to follow a quite unique mechanism (PubMed:12359880), in which Pi instead of H(2)O is used for the nucleophilic attack on the phosphoryl group. P-Ser-HPr dephosphorylation is therefore not a phosphohydrolysis but a phospho-phosphorolysis reaction, and the bifunctional enzyme was dubbed HPr kinase/phosphorylase.</text>
</comment>
<proteinExistence type="evidence at protein level"/>
<keyword id="KW-0021">Allosteric enzyme</keyword>
<keyword id="KW-0067">ATP-binding</keyword>
<keyword id="KW-0119">Carbohydrate metabolism</keyword>
<keyword id="KW-0903">Direct protein sequencing</keyword>
<keyword id="KW-0418">Kinase</keyword>
<keyword id="KW-0460">Magnesium</keyword>
<keyword id="KW-0479">Metal-binding</keyword>
<keyword id="KW-0511">Multifunctional enzyme</keyword>
<keyword id="KW-0547">Nucleotide-binding</keyword>
<keyword id="KW-1185">Reference proteome</keyword>
<keyword id="KW-0723">Serine/threonine-protein kinase</keyword>
<keyword id="KW-0808">Transferase</keyword>
<reference key="1">
    <citation type="submission" date="1997-11" db="EMBL/GenBank/DDBJ databases">
        <title>Nucleotide sequence of the 300-304 chromosomal segment of Bacillus subtilis.</title>
        <authorList>
            <person name="Lazarevic V."/>
            <person name="Soldo B."/>
            <person name="Rivolta C."/>
            <person name="Reynolds S."/>
            <person name="Mauel C."/>
            <person name="Karamata D."/>
        </authorList>
    </citation>
    <scope>NUCLEOTIDE SEQUENCE [GENOMIC DNA]</scope>
</reference>
<reference key="2">
    <citation type="journal article" date="1997" name="Nature">
        <title>The complete genome sequence of the Gram-positive bacterium Bacillus subtilis.</title>
        <authorList>
            <person name="Kunst F."/>
            <person name="Ogasawara N."/>
            <person name="Moszer I."/>
            <person name="Albertini A.M."/>
            <person name="Alloni G."/>
            <person name="Azevedo V."/>
            <person name="Bertero M.G."/>
            <person name="Bessieres P."/>
            <person name="Bolotin A."/>
            <person name="Borchert S."/>
            <person name="Borriss R."/>
            <person name="Boursier L."/>
            <person name="Brans A."/>
            <person name="Braun M."/>
            <person name="Brignell S.C."/>
            <person name="Bron S."/>
            <person name="Brouillet S."/>
            <person name="Bruschi C.V."/>
            <person name="Caldwell B."/>
            <person name="Capuano V."/>
            <person name="Carter N.M."/>
            <person name="Choi S.-K."/>
            <person name="Codani J.-J."/>
            <person name="Connerton I.F."/>
            <person name="Cummings N.J."/>
            <person name="Daniel R.A."/>
            <person name="Denizot F."/>
            <person name="Devine K.M."/>
            <person name="Duesterhoeft A."/>
            <person name="Ehrlich S.D."/>
            <person name="Emmerson P.T."/>
            <person name="Entian K.-D."/>
            <person name="Errington J."/>
            <person name="Fabret C."/>
            <person name="Ferrari E."/>
            <person name="Foulger D."/>
            <person name="Fritz C."/>
            <person name="Fujita M."/>
            <person name="Fujita Y."/>
            <person name="Fuma S."/>
            <person name="Galizzi A."/>
            <person name="Galleron N."/>
            <person name="Ghim S.-Y."/>
            <person name="Glaser P."/>
            <person name="Goffeau A."/>
            <person name="Golightly E.J."/>
            <person name="Grandi G."/>
            <person name="Guiseppi G."/>
            <person name="Guy B.J."/>
            <person name="Haga K."/>
            <person name="Haiech J."/>
            <person name="Harwood C.R."/>
            <person name="Henaut A."/>
            <person name="Hilbert H."/>
            <person name="Holsappel S."/>
            <person name="Hosono S."/>
            <person name="Hullo M.-F."/>
            <person name="Itaya M."/>
            <person name="Jones L.-M."/>
            <person name="Joris B."/>
            <person name="Karamata D."/>
            <person name="Kasahara Y."/>
            <person name="Klaerr-Blanchard M."/>
            <person name="Klein C."/>
            <person name="Kobayashi Y."/>
            <person name="Koetter P."/>
            <person name="Koningstein G."/>
            <person name="Krogh S."/>
            <person name="Kumano M."/>
            <person name="Kurita K."/>
            <person name="Lapidus A."/>
            <person name="Lardinois S."/>
            <person name="Lauber J."/>
            <person name="Lazarevic V."/>
            <person name="Lee S.-M."/>
            <person name="Levine A."/>
            <person name="Liu H."/>
            <person name="Masuda S."/>
            <person name="Mauel C."/>
            <person name="Medigue C."/>
            <person name="Medina N."/>
            <person name="Mellado R.P."/>
            <person name="Mizuno M."/>
            <person name="Moestl D."/>
            <person name="Nakai S."/>
            <person name="Noback M."/>
            <person name="Noone D."/>
            <person name="O'Reilly M."/>
            <person name="Ogawa K."/>
            <person name="Ogiwara A."/>
            <person name="Oudega B."/>
            <person name="Park S.-H."/>
            <person name="Parro V."/>
            <person name="Pohl T.M."/>
            <person name="Portetelle D."/>
            <person name="Porwollik S."/>
            <person name="Prescott A.M."/>
            <person name="Presecan E."/>
            <person name="Pujic P."/>
            <person name="Purnelle B."/>
            <person name="Rapoport G."/>
            <person name="Rey M."/>
            <person name="Reynolds S."/>
            <person name="Rieger M."/>
            <person name="Rivolta C."/>
            <person name="Rocha E."/>
            <person name="Roche B."/>
            <person name="Rose M."/>
            <person name="Sadaie Y."/>
            <person name="Sato T."/>
            <person name="Scanlan E."/>
            <person name="Schleich S."/>
            <person name="Schroeter R."/>
            <person name="Scoffone F."/>
            <person name="Sekiguchi J."/>
            <person name="Sekowska A."/>
            <person name="Seror S.J."/>
            <person name="Serror P."/>
            <person name="Shin B.-S."/>
            <person name="Soldo B."/>
            <person name="Sorokin A."/>
            <person name="Tacconi E."/>
            <person name="Takagi T."/>
            <person name="Takahashi H."/>
            <person name="Takemaru K."/>
            <person name="Takeuchi M."/>
            <person name="Tamakoshi A."/>
            <person name="Tanaka T."/>
            <person name="Terpstra P."/>
            <person name="Tognoni A."/>
            <person name="Tosato V."/>
            <person name="Uchiyama S."/>
            <person name="Vandenbol M."/>
            <person name="Vannier F."/>
            <person name="Vassarotti A."/>
            <person name="Viari A."/>
            <person name="Wambutt R."/>
            <person name="Wedler E."/>
            <person name="Wedler H."/>
            <person name="Weitzenegger T."/>
            <person name="Winters P."/>
            <person name="Wipat A."/>
            <person name="Yamamoto H."/>
            <person name="Yamane K."/>
            <person name="Yasumoto K."/>
            <person name="Yata K."/>
            <person name="Yoshida K."/>
            <person name="Yoshikawa H.-F."/>
            <person name="Zumstein E."/>
            <person name="Yoshikawa H."/>
            <person name="Danchin A."/>
        </authorList>
    </citation>
    <scope>NUCLEOTIDE SEQUENCE [LARGE SCALE GENOMIC DNA]</scope>
    <source>
        <strain>168</strain>
    </source>
</reference>
<reference key="3">
    <citation type="submission" date="1996-07" db="EMBL/GenBank/DDBJ databases">
        <authorList>
            <person name="Dartois V.A."/>
            <person name="Hoch J.A."/>
        </authorList>
    </citation>
    <scope>NUCLEOTIDE SEQUENCE [GENOMIC DNA] OF 242-310</scope>
    <source>
        <strain>168</strain>
    </source>
</reference>
<reference key="4">
    <citation type="journal article" date="1997" name="Proc. Natl. Acad. Sci. U.S.A.">
        <title>The Bacillus subtilis crh gene encodes a HPr-like protein involved in carbon catabolite repression.</title>
        <authorList>
            <person name="Galinier A."/>
            <person name="Haiech J."/>
            <person name="Kilhoffer M.-C."/>
            <person name="Jaquinod M."/>
            <person name="Stuelke J."/>
            <person name="Deutscher J."/>
            <person name="Martin-Verstraete I."/>
        </authorList>
    </citation>
    <scope>PHOSPHORYLATION OF CRH PROTEIN</scope>
    <source>
        <strain>QB5081</strain>
    </source>
</reference>
<reference key="5">
    <citation type="journal article" date="1998" name="Mol. Microbiol.">
        <title>A novel protein kinase that controls carbon catabolite repression in bacteria.</title>
        <authorList>
            <person name="Reizer J."/>
            <person name="Hoischen C."/>
            <person name="Titgemeyer F."/>
            <person name="Rivolta C."/>
            <person name="Rabus R."/>
            <person name="Stuelke J."/>
            <person name="Karamata D."/>
            <person name="Saier M.H. Jr."/>
            <person name="Hillen W."/>
        </authorList>
    </citation>
    <scope>PROTEIN SEQUENCE OF 2-18</scope>
    <scope>CHARACTERIZATION</scope>
    <scope>MASS SPECTROMETRY</scope>
</reference>
<reference key="6">
    <citation type="journal article" date="1998" name="Proc. Natl. Acad. Sci. U.S.A.">
        <title>New protein kinase and protein phosphatase families mediate signal transduction in bacterial catabolite repression.</title>
        <authorList>
            <person name="Galinier A."/>
            <person name="Kravanja M."/>
            <person name="Engelmann R."/>
            <person name="Hengstenberg W."/>
            <person name="Kilhoffer M.-C."/>
            <person name="Deutscher J."/>
            <person name="Haiech J."/>
        </authorList>
    </citation>
    <scope>CHARACTERIZATION OF THE KINASE ACTIVITY</scope>
</reference>
<reference key="7">
    <citation type="journal article" date="1999" name="Mol. Microbiol.">
        <title>The hprK gene of Enterococcus faecalis encodes a novel bifunctional enzyme: the HPr kinase/phosphatase.</title>
        <authorList>
            <person name="Kravanja M."/>
            <person name="Engelmann R."/>
            <person name="Dossonnet V."/>
            <person name="Bluggel M."/>
            <person name="Meyer H.E."/>
            <person name="Frank R."/>
            <person name="Galinier A."/>
            <person name="Deutscher J."/>
            <person name="Schnell N."/>
            <person name="Hengstenberg W."/>
        </authorList>
    </citation>
    <scope>FUNCTION</scope>
</reference>
<reference key="8">
    <citation type="journal article" date="2002" name="Biochemistry">
        <title>Insights into the functioning of Bacillus subtilis HPr kinase/phosphatase: affinity for its protein substrates and role of cations and phosphate.</title>
        <authorList>
            <person name="Lavergne J.-P."/>
            <person name="Jault J.-M."/>
            <person name="Galinier A."/>
        </authorList>
    </citation>
    <scope>CHARACTERIZATION</scope>
    <scope>COFACTOR</scope>
</reference>
<reference key="9">
    <citation type="journal article" date="2002" name="Microbiology">
        <title>HPr kinase/phosphatase of Bacillus subtilis: expression of the gene and effects of mutations on enzyme activity, growth and carbon catabolite repression.</title>
        <authorList>
            <person name="Hanson K.G."/>
            <person name="Steinhauer K."/>
            <person name="Reizer J."/>
            <person name="Hillen W."/>
            <person name="Stuelke J."/>
        </authorList>
    </citation>
    <scope>INDUCTION</scope>
    <scope>MUTAGENESIS OF GLY-148</scope>
</reference>
<reference key="10">
    <citation type="journal article" date="2002" name="Proc. Natl. Acad. Sci. U.S.A.">
        <title>Pyrophosphate-producing protein dephosphorylation by HPr kinase/phosphorylase: a relic of early life?</title>
        <authorList>
            <person name="Mijakovic I."/>
            <person name="Poncet S."/>
            <person name="Galinier A."/>
            <person name="Monedero V."/>
            <person name="Fieulaine S."/>
            <person name="Janin J."/>
            <person name="Nessler S."/>
            <person name="Marquez J.A."/>
            <person name="Scheffzek K."/>
            <person name="Hasenbein S."/>
            <person name="Hengstenberg W."/>
            <person name="Deutscher J."/>
        </authorList>
    </citation>
    <scope>DEPHOSPHORYLATION REACTION MECHANISM</scope>
</reference>
<reference key="11">
    <citation type="journal article" date="2003" name="J. Biol. Chem.">
        <title>Properties and regulation of the bifunctional enzyme HPr kinase/phosphatase in Bacillus subtilis.</title>
        <authorList>
            <person name="Ramstroem H."/>
            <person name="Sanglier S."/>
            <person name="Leize-Wagner E."/>
            <person name="Philippe C."/>
            <person name="van Dorsselaer A."/>
            <person name="Haiech J."/>
        </authorList>
    </citation>
    <scope>CHARACTERIZATION</scope>
</reference>
<reference key="12">
    <citation type="journal article" date="2003" name="Biochemistry">
        <title>Regulation and mutational analysis of the HPr kinase/phosphorylase from Bacillus subtilis.</title>
        <authorList>
            <person name="Pompeo F."/>
            <person name="Granet Y."/>
            <person name="Lavergne J.-P."/>
            <person name="Grangeasse C."/>
            <person name="Nessler S."/>
            <person name="Jault J.-M."/>
            <person name="Galinier A."/>
        </authorList>
    </citation>
    <scope>MUTAGENESIS OF HIS-138; GLY-153; SER-155; GLY-156; GLY-158; LYS-159; SER-160 AND HIS-171</scope>
</reference>
<reference key="13">
    <citation type="journal article" date="2004" name="Biochim. Biophys. Acta">
        <title>HPr kinase/phosphorylase, a Walker motif A-containing bifunctional sensor enzyme controlling catabolite repression in Gram-positive bacteria.</title>
        <authorList>
            <person name="Poncet S."/>
            <person name="Mijakovic I."/>
            <person name="Nessler S."/>
            <person name="Gueguen-Chaignon V."/>
            <person name="Chaptal V."/>
            <person name="Galinier A."/>
            <person name="Boel G."/>
            <person name="Maze A."/>
            <person name="Deutscher J."/>
        </authorList>
    </citation>
    <scope>REVIEW</scope>
</reference>
<protein>
    <recommendedName>
        <fullName>HPr kinase/phosphorylase</fullName>
        <shortName>HPrK/P</shortName>
        <ecNumber>2.7.11.-</ecNumber>
        <ecNumber>2.7.4.-</ecNumber>
    </recommendedName>
    <alternativeName>
        <fullName>HPr kinase/phosphatase</fullName>
    </alternativeName>
    <alternativeName>
        <fullName>HPr(Ser) kinase/phosphorylase</fullName>
    </alternativeName>
</protein>
<evidence type="ECO:0000250" key="1"/>
<evidence type="ECO:0000255" key="2"/>
<evidence type="ECO:0000269" key="3">
    <source>
    </source>
</evidence>
<evidence type="ECO:0000269" key="4">
    <source>
    </source>
</evidence>
<evidence type="ECO:0000269" key="5">
    <source>
    </source>
</evidence>
<evidence type="ECO:0000269" key="6">
    <source>
    </source>
</evidence>
<evidence type="ECO:0000269" key="7">
    <source>
    </source>
</evidence>
<evidence type="ECO:0000305" key="8"/>
<evidence type="ECO:0000305" key="9">
    <source>
    </source>
</evidence>
<sequence>MAKVRTKDVMEQFNLELISGEEGINRPITMSDLSRPGIEIAGYFTYYPRERVQLLGKTELSFFEQLPEEEKKQRMDSLCTDVTPAIILSRDMPIPQELIDASEKNGVPVLRSPLKTTRLSSRLTNFLESRLAPTTAIHGVLVDIYGVGVLITGKSGVGKSETALELVKRGHRLVADDCVEIRQEDQDTLVGNAPELIEHLLEIRGLGIINVMTLFGAGAVRSNKRITIVMNLELWEQGKQYDRLGLEEETMKIIDTEITKLTIPVRPGRNLAVIIEVAAMNFRLKRMGLNAAEQFTNKLADVIEDGEQEE</sequence>
<feature type="initiator methionine" description="Removed" evidence="6">
    <location>
        <position position="1"/>
    </location>
</feature>
<feature type="chain" id="PRO_0000058946" description="HPr kinase/phosphorylase">
    <location>
        <begin position="2"/>
        <end position="310"/>
    </location>
</feature>
<feature type="region of interest" description="Important for the catalytic mechanism of both phosphorylation and dephosphorylation">
    <location>
        <begin position="201"/>
        <end position="210"/>
    </location>
</feature>
<feature type="region of interest" description="Important for the catalytic mechanism of dephosphorylation" evidence="1">
    <location>
        <begin position="264"/>
        <end position="269"/>
    </location>
</feature>
<feature type="active site" evidence="1">
    <location>
        <position position="159"/>
    </location>
</feature>
<feature type="active site" description="Proton acceptor; for phosphorylation activity. Proton donor; for dephosphorylation activity" evidence="1">
    <location>
        <position position="177"/>
    </location>
</feature>
<feature type="active site" evidence="1">
    <location>
        <position position="243"/>
    </location>
</feature>
<feature type="binding site" evidence="2">
    <location>
        <position position="138"/>
    </location>
    <ligand>
        <name>Mg(2+)</name>
        <dbReference type="ChEBI" id="CHEBI:18420"/>
    </ligand>
</feature>
<feature type="binding site" evidence="8">
    <location>
        <begin position="153"/>
        <end position="160"/>
    </location>
    <ligand>
        <name>ATP</name>
        <dbReference type="ChEBI" id="CHEBI:30616"/>
    </ligand>
</feature>
<feature type="binding site" evidence="8">
    <location>
        <position position="160"/>
    </location>
    <ligand>
        <name>Mg(2+)</name>
        <dbReference type="ChEBI" id="CHEBI:18420"/>
    </ligand>
</feature>
<feature type="binding site" evidence="8">
    <location>
        <position position="202"/>
    </location>
    <ligand>
        <name>Mg(2+)</name>
        <dbReference type="ChEBI" id="CHEBI:18420"/>
    </ligand>
</feature>
<feature type="mutagenesis site" description="No effect on both kinase and phosphorylase activities." evidence="5">
    <original>H</original>
    <variation>A</variation>
    <location>
        <position position="138"/>
    </location>
</feature>
<feature type="mutagenesis site" description="Loss of both kinase and phosphorylase activities." evidence="4">
    <original>G</original>
    <variation>A</variation>
    <location>
        <position position="148"/>
    </location>
</feature>
<feature type="mutagenesis site" description="Loss of both kinase and phosphorylase activities." evidence="5">
    <original>G</original>
    <variation>A</variation>
    <location>
        <position position="153"/>
    </location>
</feature>
<feature type="mutagenesis site" description="Nearly no effect on both kinase and phosphorylase activities." evidence="5">
    <original>S</original>
    <variation>A</variation>
    <variation>T</variation>
    <location>
        <position position="155"/>
    </location>
</feature>
<feature type="mutagenesis site" description="Loss of both kinase and phosphorylase activities." evidence="5">
    <original>S</original>
    <variation>C</variation>
    <location>
        <position position="155"/>
    </location>
</feature>
<feature type="mutagenesis site" description="Loss of both kinase and phosphorylase activities." evidence="5">
    <original>G</original>
    <variation>A</variation>
    <location>
        <position position="156"/>
    </location>
</feature>
<feature type="mutagenesis site" description="Loss of both kinase and phosphorylase activities." evidence="5">
    <original>G</original>
    <variation>A</variation>
    <location>
        <position position="158"/>
    </location>
</feature>
<feature type="mutagenesis site" description="Slight reduction in both kinase and phosphorylase activities." evidence="5">
    <original>K</original>
    <variation>R</variation>
    <location>
        <position position="159"/>
    </location>
</feature>
<feature type="mutagenesis site" description="Loss of both kinase and phosphorylase activities." evidence="5">
    <original>S</original>
    <variation>A</variation>
    <location>
        <position position="160"/>
    </location>
</feature>
<feature type="mutagenesis site" description="Nearly no effect on both kinase and phosphorylase activities." evidence="5">
    <original>S</original>
    <variation>T</variation>
    <location>
        <position position="160"/>
    </location>
</feature>
<feature type="mutagenesis site" description="Loss of both kinase and phosphorylase activities." evidence="5">
    <original>H</original>
    <variation>R</variation>
    <location>
        <position position="171"/>
    </location>
</feature>
<feature type="mutagenesis site" description="No effect on ATP-dependent kinase activity, but loss of both PPi-kinase and phosphorylase activities.">
    <original>E</original>
    <variation>A</variation>
    <location>
        <position position="202"/>
    </location>
</feature>
<feature type="mutagenesis site" description="Reduced kinase activity and loss of phosphorylase activity.">
    <original>R</original>
    <variation>A</variation>
    <location>
        <position position="204"/>
    </location>
</feature>
<feature type="mutagenesis site" description="No effect on ATP-dependent kinase activity, but loss of both PPi-kinase and phosphorylase activities.">
    <original>G</original>
    <variation>A</variation>
    <location>
        <position position="205"/>
    </location>
</feature>
<feature type="mutagenesis site" description="Reduced kinase activity and loss of phosphorylase activity. No effect on FBP binding.">
    <original>G</original>
    <variation>A</variation>
    <location>
        <position position="207"/>
    </location>
</feature>
<organism>
    <name type="scientific">Bacillus subtilis (strain 168)</name>
    <dbReference type="NCBI Taxonomy" id="224308"/>
    <lineage>
        <taxon>Bacteria</taxon>
        <taxon>Bacillati</taxon>
        <taxon>Bacillota</taxon>
        <taxon>Bacilli</taxon>
        <taxon>Bacillales</taxon>
        <taxon>Bacillaceae</taxon>
        <taxon>Bacillus</taxon>
    </lineage>
</organism>
<dbReference type="EC" id="2.7.11.-"/>
<dbReference type="EC" id="2.7.4.-"/>
<dbReference type="EMBL" id="AF017113">
    <property type="protein sequence ID" value="AAC67286.1"/>
    <property type="molecule type" value="Genomic_DNA"/>
</dbReference>
<dbReference type="EMBL" id="AL009126">
    <property type="protein sequence ID" value="CAB15505.1"/>
    <property type="molecule type" value="Genomic_DNA"/>
</dbReference>
<dbReference type="EMBL" id="U63310">
    <property type="protein sequence ID" value="AAD09500.1"/>
    <property type="molecule type" value="Genomic_DNA"/>
</dbReference>
<dbReference type="PIR" id="E70044">
    <property type="entry name" value="E70044"/>
</dbReference>
<dbReference type="RefSeq" id="NP_391380.1">
    <property type="nucleotide sequence ID" value="NC_000964.3"/>
</dbReference>
<dbReference type="RefSeq" id="WP_003228097.1">
    <property type="nucleotide sequence ID" value="NZ_OZ025638.1"/>
</dbReference>
<dbReference type="SMR" id="O34483"/>
<dbReference type="FunCoup" id="O34483">
    <property type="interactions" value="8"/>
</dbReference>
<dbReference type="IntAct" id="O34483">
    <property type="interactions" value="6"/>
</dbReference>
<dbReference type="STRING" id="224308.BSU35000"/>
<dbReference type="BindingDB" id="O34483"/>
<dbReference type="ChEMBL" id="CHEMBL4974"/>
<dbReference type="PaxDb" id="224308-BSU35000"/>
<dbReference type="EnsemblBacteria" id="CAB15505">
    <property type="protein sequence ID" value="CAB15505"/>
    <property type="gene ID" value="BSU_35000"/>
</dbReference>
<dbReference type="GeneID" id="936615"/>
<dbReference type="KEGG" id="bsu:BSU35000"/>
<dbReference type="PATRIC" id="fig|224308.179.peg.3788"/>
<dbReference type="eggNOG" id="COG1493">
    <property type="taxonomic scope" value="Bacteria"/>
</dbReference>
<dbReference type="InParanoid" id="O34483"/>
<dbReference type="OrthoDB" id="9778803at2"/>
<dbReference type="PhylomeDB" id="O34483"/>
<dbReference type="BioCyc" id="BSUB:BSU35000-MONOMER"/>
<dbReference type="SABIO-RK" id="O34483"/>
<dbReference type="PRO" id="PR:O34483"/>
<dbReference type="Proteomes" id="UP000001570">
    <property type="component" value="Chromosome"/>
</dbReference>
<dbReference type="GO" id="GO:0005829">
    <property type="term" value="C:cytosol"/>
    <property type="evidence" value="ECO:0000318"/>
    <property type="project" value="GO_Central"/>
</dbReference>
<dbReference type="GO" id="GO:0005524">
    <property type="term" value="F:ATP binding"/>
    <property type="evidence" value="ECO:0007669"/>
    <property type="project" value="UniProtKB-UniRule"/>
</dbReference>
<dbReference type="GO" id="GO:0000287">
    <property type="term" value="F:magnesium ion binding"/>
    <property type="evidence" value="ECO:0007669"/>
    <property type="project" value="UniProtKB-UniRule"/>
</dbReference>
<dbReference type="GO" id="GO:0000155">
    <property type="term" value="F:phosphorelay sensor kinase activity"/>
    <property type="evidence" value="ECO:0007669"/>
    <property type="project" value="InterPro"/>
</dbReference>
<dbReference type="GO" id="GO:0004674">
    <property type="term" value="F:protein serine/threonine kinase activity"/>
    <property type="evidence" value="ECO:0007669"/>
    <property type="project" value="UniProtKB-KW"/>
</dbReference>
<dbReference type="GO" id="GO:0004712">
    <property type="term" value="F:protein serine/threonine/tyrosine kinase activity"/>
    <property type="evidence" value="ECO:0007669"/>
    <property type="project" value="UniProtKB-UniRule"/>
</dbReference>
<dbReference type="GO" id="GO:0006109">
    <property type="term" value="P:regulation of carbohydrate metabolic process"/>
    <property type="evidence" value="ECO:0007669"/>
    <property type="project" value="UniProtKB-UniRule"/>
</dbReference>
<dbReference type="CDD" id="cd01918">
    <property type="entry name" value="HprK_C"/>
    <property type="match status" value="1"/>
</dbReference>
<dbReference type="FunFam" id="3.40.1390.20:FF:000002">
    <property type="entry name" value="HPr kinase/phosphorylase"/>
    <property type="match status" value="1"/>
</dbReference>
<dbReference type="FunFam" id="3.40.50.300:FF:000174">
    <property type="entry name" value="HPr kinase/phosphorylase"/>
    <property type="match status" value="1"/>
</dbReference>
<dbReference type="Gene3D" id="3.40.1390.20">
    <property type="entry name" value="HprK N-terminal domain-like"/>
    <property type="match status" value="1"/>
</dbReference>
<dbReference type="Gene3D" id="3.40.50.300">
    <property type="entry name" value="P-loop containing nucleotide triphosphate hydrolases"/>
    <property type="match status" value="1"/>
</dbReference>
<dbReference type="HAMAP" id="MF_01249">
    <property type="entry name" value="HPr_kinase"/>
    <property type="match status" value="1"/>
</dbReference>
<dbReference type="InterPro" id="IPR003755">
    <property type="entry name" value="HPr(Ser)_kin/Pase"/>
</dbReference>
<dbReference type="InterPro" id="IPR011104">
    <property type="entry name" value="Hpr_kin/Pase_C"/>
</dbReference>
<dbReference type="InterPro" id="IPR011126">
    <property type="entry name" value="Hpr_kin/Pase_Hpr_N"/>
</dbReference>
<dbReference type="InterPro" id="IPR027417">
    <property type="entry name" value="P-loop_NTPase"/>
</dbReference>
<dbReference type="InterPro" id="IPR028979">
    <property type="entry name" value="Ser_kin/Pase_Hpr-like_N_sf"/>
</dbReference>
<dbReference type="NCBIfam" id="TIGR00679">
    <property type="entry name" value="hpr-ser"/>
    <property type="match status" value="1"/>
</dbReference>
<dbReference type="PANTHER" id="PTHR30305:SF1">
    <property type="entry name" value="HPR KINASE_PHOSPHORYLASE"/>
    <property type="match status" value="1"/>
</dbReference>
<dbReference type="PANTHER" id="PTHR30305">
    <property type="entry name" value="PROTEIN YJDM-RELATED"/>
    <property type="match status" value="1"/>
</dbReference>
<dbReference type="Pfam" id="PF07475">
    <property type="entry name" value="Hpr_kinase_C"/>
    <property type="match status" value="1"/>
</dbReference>
<dbReference type="Pfam" id="PF02603">
    <property type="entry name" value="Hpr_kinase_N"/>
    <property type="match status" value="1"/>
</dbReference>
<dbReference type="SUPFAM" id="SSF75138">
    <property type="entry name" value="HprK N-terminal domain-like"/>
    <property type="match status" value="1"/>
</dbReference>
<dbReference type="SUPFAM" id="SSF53795">
    <property type="entry name" value="PEP carboxykinase-like"/>
    <property type="match status" value="1"/>
</dbReference>
<accession>O34483</accession>
<accession>Q9R9E3</accession>
<gene>
    <name type="primary">hprK</name>
    <name type="synonym">ptsK</name>
    <name type="synonym">yvoB</name>
    <name type="ordered locus">BSU35000</name>
</gene>